<accession>Q8DEM9</accession>
<organism>
    <name type="scientific">Vibrio vulnificus (strain CMCP6)</name>
    <dbReference type="NCBI Taxonomy" id="216895"/>
    <lineage>
        <taxon>Bacteria</taxon>
        <taxon>Pseudomonadati</taxon>
        <taxon>Pseudomonadota</taxon>
        <taxon>Gammaproteobacteria</taxon>
        <taxon>Vibrionales</taxon>
        <taxon>Vibrionaceae</taxon>
        <taxon>Vibrio</taxon>
    </lineage>
</organism>
<dbReference type="EC" id="3.2.2.9" evidence="1"/>
<dbReference type="EMBL" id="AE016795">
    <property type="protein sequence ID" value="AAO09075.1"/>
    <property type="molecule type" value="Genomic_DNA"/>
</dbReference>
<dbReference type="RefSeq" id="WP_011078645.1">
    <property type="nucleotide sequence ID" value="NC_004459.3"/>
</dbReference>
<dbReference type="SMR" id="Q8DEM9"/>
<dbReference type="KEGG" id="vvu:VV1_0558"/>
<dbReference type="HOGENOM" id="CLU_031248_2_2_6"/>
<dbReference type="UniPathway" id="UPA00904">
    <property type="reaction ID" value="UER00871"/>
</dbReference>
<dbReference type="Proteomes" id="UP000002275">
    <property type="component" value="Chromosome 1"/>
</dbReference>
<dbReference type="GO" id="GO:0005829">
    <property type="term" value="C:cytosol"/>
    <property type="evidence" value="ECO:0007669"/>
    <property type="project" value="TreeGrafter"/>
</dbReference>
<dbReference type="GO" id="GO:0008782">
    <property type="term" value="F:adenosylhomocysteine nucleosidase activity"/>
    <property type="evidence" value="ECO:0007669"/>
    <property type="project" value="UniProtKB-UniRule"/>
</dbReference>
<dbReference type="GO" id="GO:0008930">
    <property type="term" value="F:methylthioadenosine nucleosidase activity"/>
    <property type="evidence" value="ECO:0007669"/>
    <property type="project" value="UniProtKB-UniRule"/>
</dbReference>
<dbReference type="GO" id="GO:0019509">
    <property type="term" value="P:L-methionine salvage from methylthioadenosine"/>
    <property type="evidence" value="ECO:0007669"/>
    <property type="project" value="UniProtKB-UniRule"/>
</dbReference>
<dbReference type="GO" id="GO:0019284">
    <property type="term" value="P:L-methionine salvage from S-adenosylmethionine"/>
    <property type="evidence" value="ECO:0007669"/>
    <property type="project" value="TreeGrafter"/>
</dbReference>
<dbReference type="GO" id="GO:0009164">
    <property type="term" value="P:nucleoside catabolic process"/>
    <property type="evidence" value="ECO:0007669"/>
    <property type="project" value="InterPro"/>
</dbReference>
<dbReference type="CDD" id="cd09008">
    <property type="entry name" value="MTAN"/>
    <property type="match status" value="1"/>
</dbReference>
<dbReference type="FunFam" id="3.40.50.1580:FF:000001">
    <property type="entry name" value="MTA/SAH nucleosidase family protein"/>
    <property type="match status" value="1"/>
</dbReference>
<dbReference type="Gene3D" id="3.40.50.1580">
    <property type="entry name" value="Nucleoside phosphorylase domain"/>
    <property type="match status" value="1"/>
</dbReference>
<dbReference type="HAMAP" id="MF_01684">
    <property type="entry name" value="Salvage_MtnN"/>
    <property type="match status" value="1"/>
</dbReference>
<dbReference type="InterPro" id="IPR010049">
    <property type="entry name" value="MTA_SAH_Nsdase"/>
</dbReference>
<dbReference type="InterPro" id="IPR000845">
    <property type="entry name" value="Nucleoside_phosphorylase_d"/>
</dbReference>
<dbReference type="InterPro" id="IPR035994">
    <property type="entry name" value="Nucleoside_phosphorylase_sf"/>
</dbReference>
<dbReference type="NCBIfam" id="TIGR01704">
    <property type="entry name" value="MTA_SAH-Nsdase"/>
    <property type="match status" value="1"/>
</dbReference>
<dbReference type="NCBIfam" id="NF004079">
    <property type="entry name" value="PRK05584.1"/>
    <property type="match status" value="1"/>
</dbReference>
<dbReference type="PANTHER" id="PTHR46832">
    <property type="entry name" value="5'-METHYLTHIOADENOSINE/S-ADENOSYLHOMOCYSTEINE NUCLEOSIDASE"/>
    <property type="match status" value="1"/>
</dbReference>
<dbReference type="PANTHER" id="PTHR46832:SF1">
    <property type="entry name" value="5'-METHYLTHIOADENOSINE_S-ADENOSYLHOMOCYSTEINE NUCLEOSIDASE"/>
    <property type="match status" value="1"/>
</dbReference>
<dbReference type="Pfam" id="PF01048">
    <property type="entry name" value="PNP_UDP_1"/>
    <property type="match status" value="1"/>
</dbReference>
<dbReference type="SUPFAM" id="SSF53167">
    <property type="entry name" value="Purine and uridine phosphorylases"/>
    <property type="match status" value="1"/>
</dbReference>
<sequence length="231" mass="24794">MKVGIIGAMQQEVAILKEAMTNAQTVNKAGCTFYSGQINGVEVVLLQSGIGKVAAAIGTTILLDEYQPDMVLNTGSAGGFDSSLNLGDVVISTEVRHHDADVTAFGYEMGQMAGQPAAFLADEKLMNLAEKALEQMDGQHAVRGLICTGDAFVCTAERQAFIRQHFPSVIAVEMEASAIAQTCYQFKVPFVVVRAISDVADKESPMSFEEFLPLAAKSSSEMVFKMLELLK</sequence>
<comment type="function">
    <text evidence="1">Catalyzes the irreversible cleavage of the glycosidic bond in both 5'-methylthioadenosine (MTA) and S-adenosylhomocysteine (SAH/AdoHcy) to adenine and the corresponding thioribose, 5'-methylthioribose and S-ribosylhomocysteine, respectively. Also cleaves 5'-deoxyadenosine, a toxic by-product of radical S-adenosylmethionine (SAM) enzymes, into 5-deoxyribose and adenine.</text>
</comment>
<comment type="catalytic activity">
    <reaction evidence="1">
        <text>S-adenosyl-L-homocysteine + H2O = S-(5-deoxy-D-ribos-5-yl)-L-homocysteine + adenine</text>
        <dbReference type="Rhea" id="RHEA:17805"/>
        <dbReference type="ChEBI" id="CHEBI:15377"/>
        <dbReference type="ChEBI" id="CHEBI:16708"/>
        <dbReference type="ChEBI" id="CHEBI:57856"/>
        <dbReference type="ChEBI" id="CHEBI:58195"/>
        <dbReference type="EC" id="3.2.2.9"/>
    </reaction>
</comment>
<comment type="catalytic activity">
    <reaction evidence="1">
        <text>S-methyl-5'-thioadenosine + H2O = 5-(methylsulfanyl)-D-ribose + adenine</text>
        <dbReference type="Rhea" id="RHEA:13617"/>
        <dbReference type="ChEBI" id="CHEBI:15377"/>
        <dbReference type="ChEBI" id="CHEBI:16708"/>
        <dbReference type="ChEBI" id="CHEBI:17509"/>
        <dbReference type="ChEBI" id="CHEBI:78440"/>
        <dbReference type="EC" id="3.2.2.9"/>
    </reaction>
</comment>
<comment type="catalytic activity">
    <reaction evidence="1">
        <text>5'-deoxyadenosine + H2O = 5-deoxy-D-ribose + adenine</text>
        <dbReference type="Rhea" id="RHEA:29859"/>
        <dbReference type="ChEBI" id="CHEBI:15377"/>
        <dbReference type="ChEBI" id="CHEBI:16708"/>
        <dbReference type="ChEBI" id="CHEBI:17319"/>
        <dbReference type="ChEBI" id="CHEBI:149540"/>
        <dbReference type="EC" id="3.2.2.9"/>
    </reaction>
    <physiologicalReaction direction="left-to-right" evidence="1">
        <dbReference type="Rhea" id="RHEA:29860"/>
    </physiologicalReaction>
</comment>
<comment type="pathway">
    <text evidence="1">Amino-acid biosynthesis; L-methionine biosynthesis via salvage pathway; S-methyl-5-thio-alpha-D-ribose 1-phosphate from S-methyl-5'-thioadenosine (hydrolase route): step 1/2.</text>
</comment>
<comment type="similarity">
    <text evidence="1">Belongs to the PNP/UDP phosphorylase family. MtnN subfamily.</text>
</comment>
<keyword id="KW-0028">Amino-acid biosynthesis</keyword>
<keyword id="KW-0378">Hydrolase</keyword>
<keyword id="KW-0486">Methionine biosynthesis</keyword>
<gene>
    <name evidence="1" type="primary">mtnN</name>
    <name type="ordered locus">VV1_0558</name>
</gene>
<feature type="chain" id="PRO_0000359388" description="5'-methylthioadenosine/S-adenosylhomocysteine nucleosidase">
    <location>
        <begin position="1"/>
        <end position="231"/>
    </location>
</feature>
<feature type="active site" description="Proton acceptor" evidence="1">
    <location>
        <position position="12"/>
    </location>
</feature>
<feature type="active site" description="Proton donor" evidence="1">
    <location>
        <position position="198"/>
    </location>
</feature>
<feature type="binding site" evidence="1">
    <location>
        <position position="78"/>
    </location>
    <ligand>
        <name>substrate</name>
    </ligand>
</feature>
<feature type="binding site" evidence="1">
    <location>
        <position position="153"/>
    </location>
    <ligand>
        <name>substrate</name>
    </ligand>
</feature>
<feature type="binding site" evidence="1">
    <location>
        <begin position="174"/>
        <end position="175"/>
    </location>
    <ligand>
        <name>substrate</name>
    </ligand>
</feature>
<proteinExistence type="inferred from homology"/>
<reference key="1">
    <citation type="submission" date="2002-12" db="EMBL/GenBank/DDBJ databases">
        <title>Complete genome sequence of Vibrio vulnificus CMCP6.</title>
        <authorList>
            <person name="Rhee J.H."/>
            <person name="Kim S.Y."/>
            <person name="Chung S.S."/>
            <person name="Kim J.J."/>
            <person name="Moon Y.H."/>
            <person name="Jeong H."/>
            <person name="Choy H.E."/>
        </authorList>
    </citation>
    <scope>NUCLEOTIDE SEQUENCE [LARGE SCALE GENOMIC DNA]</scope>
    <source>
        <strain>CMCP6</strain>
    </source>
</reference>
<evidence type="ECO:0000255" key="1">
    <source>
        <dbReference type="HAMAP-Rule" id="MF_01684"/>
    </source>
</evidence>
<protein>
    <recommendedName>
        <fullName evidence="1">5'-methylthioadenosine/S-adenosylhomocysteine nucleosidase</fullName>
        <shortName evidence="1">MTA/SAH nucleosidase</shortName>
        <shortName evidence="1">MTAN</shortName>
        <ecNumber evidence="1">3.2.2.9</ecNumber>
    </recommendedName>
    <alternativeName>
        <fullName evidence="1">5'-deoxyadenosine nucleosidase</fullName>
        <shortName evidence="1">DOA nucleosidase</shortName>
        <shortName evidence="1">dAdo nucleosidase</shortName>
    </alternativeName>
    <alternativeName>
        <fullName evidence="1">5'-methylthioadenosine nucleosidase</fullName>
        <shortName evidence="1">MTA nucleosidase</shortName>
    </alternativeName>
    <alternativeName>
        <fullName evidence="1">S-adenosylhomocysteine nucleosidase</fullName>
        <shortName evidence="1">AdoHcy nucleosidase</shortName>
        <shortName evidence="1">SAH nucleosidase</shortName>
        <shortName evidence="1">SRH nucleosidase</shortName>
    </alternativeName>
</protein>
<name>MTNN_VIBVU</name>